<protein>
    <recommendedName>
        <fullName>Ubiquitin-conjugating enzyme E2 H</fullName>
        <ecNumber evidence="1">2.3.2.23</ecNumber>
    </recommendedName>
    <alternativeName>
        <fullName>(E3-independent) E2 ubiquitin-conjugating enzyme H</fullName>
        <ecNumber evidence="1">2.3.2.24</ecNumber>
    </alternativeName>
    <alternativeName>
        <fullName>E2 ubiquitin-conjugating enzyme H</fullName>
    </alternativeName>
    <alternativeName>
        <fullName>UBCH2</fullName>
    </alternativeName>
    <alternativeName>
        <fullName>Ubiquitin carrier protein H</fullName>
    </alternativeName>
    <alternativeName>
        <fullName evidence="7">Ubiquitin-conjugating enzyme E2-20K</fullName>
    </alternativeName>
    <alternativeName>
        <fullName>Ubiquitin-protein ligase H</fullName>
    </alternativeName>
</protein>
<organism>
    <name type="scientific">Mus musculus</name>
    <name type="common">Mouse</name>
    <dbReference type="NCBI Taxonomy" id="10090"/>
    <lineage>
        <taxon>Eukaryota</taxon>
        <taxon>Metazoa</taxon>
        <taxon>Chordata</taxon>
        <taxon>Craniata</taxon>
        <taxon>Vertebrata</taxon>
        <taxon>Euteleostomi</taxon>
        <taxon>Mammalia</taxon>
        <taxon>Eutheria</taxon>
        <taxon>Euarchontoglires</taxon>
        <taxon>Glires</taxon>
        <taxon>Rodentia</taxon>
        <taxon>Myomorpha</taxon>
        <taxon>Muroidea</taxon>
        <taxon>Muridae</taxon>
        <taxon>Murinae</taxon>
        <taxon>Mus</taxon>
        <taxon>Mus</taxon>
    </lineage>
</organism>
<comment type="function">
    <text evidence="1">Accepts ubiquitin from the E1 complex and catalyzes its covalent attachment to other proteins. E2 ubiquitin conjugating enzyme that transfers ubiquitin to MAEA, a core component of the CTLH E3 ubiquitin-protein ligase complex. In vitro catalyzes 'Lys-11'- and 'Lys-48'-linked polyubiquitination. Capable, in vitro, to ubiquitinate histone H2A.</text>
</comment>
<comment type="catalytic activity">
    <reaction evidence="1 2 3">
        <text>S-ubiquitinyl-[E1 ubiquitin-activating enzyme]-L-cysteine + [E2 ubiquitin-conjugating enzyme]-L-cysteine = [E1 ubiquitin-activating enzyme]-L-cysteine + S-ubiquitinyl-[E2 ubiquitin-conjugating enzyme]-L-cysteine.</text>
        <dbReference type="EC" id="2.3.2.23"/>
    </reaction>
</comment>
<comment type="catalytic activity">
    <reaction evidence="1">
        <text>S-ubiquitinyl-[E1 ubiquitin-activating enzyme]-L-cysteine + [acceptor protein]-L-lysine = [E1 ubiquitin-activating enzyme]-L-cysteine + N(6)-monoubiquitinyl-[acceptor protein]-L-lysine.</text>
        <dbReference type="EC" id="2.3.2.24"/>
    </reaction>
</comment>
<comment type="pathway">
    <text evidence="2">Protein modification; protein ubiquitination.</text>
</comment>
<comment type="subunit">
    <text evidence="1">Interacts with MAEA and WDR26, components of the CTLH complex that contains GID4, RANBP9 and/or RANBP10, MKLN1, MAEA, RMND5A (or alternatively its paralog RMND5B), GID8, ARMC8, WDR26 and YPEL5.</text>
</comment>
<comment type="tissue specificity">
    <text evidence="5 6">Detected in reticulocytes, lung, brain and skeletal muscle (at protein level) (PubMed:7761435). Ubiquitous. Detected in cardiac muscle, brain, spleen, lung, liver, skeletal muscle, kidney andmso testis (PubMed:7590289).</text>
</comment>
<comment type="PTM">
    <text evidence="1">Autoubiquitinated in vitro in the presence of NEDD4L.</text>
</comment>
<comment type="similarity">
    <text evidence="2">Belongs to the ubiquitin-conjugating enzyme family.</text>
</comment>
<feature type="chain" id="PRO_0000082487" description="Ubiquitin-conjugating enzyme E2 H">
    <location>
        <begin position="1"/>
        <end position="183"/>
    </location>
</feature>
<feature type="domain" description="UBC core" evidence="2">
    <location>
        <begin position="1"/>
        <end position="150"/>
    </location>
</feature>
<feature type="region of interest" description="Disordered" evidence="4">
    <location>
        <begin position="152"/>
        <end position="183"/>
    </location>
</feature>
<feature type="compositionally biased region" description="Low complexity" evidence="4">
    <location>
        <begin position="163"/>
        <end position="172"/>
    </location>
</feature>
<feature type="compositionally biased region" description="Acidic residues" evidence="4">
    <location>
        <begin position="173"/>
        <end position="183"/>
    </location>
</feature>
<feature type="active site" description="Glycyl thioester intermediate" evidence="2 3">
    <location>
        <position position="87"/>
    </location>
</feature>
<feature type="modified residue" description="N6-acetyllysine" evidence="8">
    <location>
        <position position="60"/>
    </location>
</feature>
<gene>
    <name type="primary">Ube2h</name>
</gene>
<sequence length="183" mass="20655">MSSPSPGKRRMDTDVVKLIESKHEVTILGGLNEFVVKFYGPQGTPYEGGVWKVRVDLPDKYPFKSPSIGFMNKIFHPNIDEASGTVCLDVINQTWTALYDLTNIFESFLPQLLAYPNPIDPLNGDAAAMYLHRPEEYKQKIKEYIQKYATEEALKEQEEGTGDSSSESSMSDFSEDEAQDMEL</sequence>
<accession>P62257</accession>
<accession>P37286</accession>
<name>UBE2H_MOUSE</name>
<evidence type="ECO:0000250" key="1">
    <source>
        <dbReference type="UniProtKB" id="P62256"/>
    </source>
</evidence>
<evidence type="ECO:0000255" key="2">
    <source>
        <dbReference type="PROSITE-ProRule" id="PRU00388"/>
    </source>
</evidence>
<evidence type="ECO:0000255" key="3">
    <source>
        <dbReference type="PROSITE-ProRule" id="PRU10133"/>
    </source>
</evidence>
<evidence type="ECO:0000256" key="4">
    <source>
        <dbReference type="SAM" id="MobiDB-lite"/>
    </source>
</evidence>
<evidence type="ECO:0000269" key="5">
    <source>
    </source>
</evidence>
<evidence type="ECO:0000269" key="6">
    <source>
    </source>
</evidence>
<evidence type="ECO:0000303" key="7">
    <source>
    </source>
</evidence>
<evidence type="ECO:0007744" key="8">
    <source>
    </source>
</evidence>
<keyword id="KW-0007">Acetylation</keyword>
<keyword id="KW-0067">ATP-binding</keyword>
<keyword id="KW-0547">Nucleotide-binding</keyword>
<keyword id="KW-1185">Reference proteome</keyword>
<keyword id="KW-0808">Transferase</keyword>
<keyword id="KW-0832">Ubl conjugation</keyword>
<keyword id="KW-0833">Ubl conjugation pathway</keyword>
<dbReference type="EC" id="2.3.2.23" evidence="1"/>
<dbReference type="EC" id="2.3.2.24" evidence="1"/>
<dbReference type="EMBL" id="U19854">
    <property type="protein sequence ID" value="AAA91975.1"/>
    <property type="molecule type" value="mRNA"/>
</dbReference>
<dbReference type="EMBL" id="BC008517">
    <property type="protein sequence ID" value="AAH08517.1"/>
    <property type="molecule type" value="mRNA"/>
</dbReference>
<dbReference type="CCDS" id="CCDS19969.1"/>
<dbReference type="PIR" id="JC4308">
    <property type="entry name" value="JC4308"/>
</dbReference>
<dbReference type="RefSeq" id="NP_033485.1">
    <property type="nucleotide sequence ID" value="NM_009459.3"/>
</dbReference>
<dbReference type="SMR" id="P62257"/>
<dbReference type="BioGRID" id="204417">
    <property type="interactions" value="9"/>
</dbReference>
<dbReference type="FunCoup" id="P62257">
    <property type="interactions" value="3765"/>
</dbReference>
<dbReference type="STRING" id="10090.ENSMUSP00000100058"/>
<dbReference type="iPTMnet" id="P62257"/>
<dbReference type="PhosphoSitePlus" id="P62257"/>
<dbReference type="PaxDb" id="10090-ENSMUSP00000100058"/>
<dbReference type="PeptideAtlas" id="P62257"/>
<dbReference type="ProteomicsDB" id="298181"/>
<dbReference type="Pumba" id="P62257"/>
<dbReference type="Antibodypedia" id="1149">
    <property type="antibodies" value="206 antibodies from 29 providers"/>
</dbReference>
<dbReference type="DNASU" id="22214"/>
<dbReference type="Ensembl" id="ENSMUST00000102993.10">
    <property type="protein sequence ID" value="ENSMUSP00000100058.4"/>
    <property type="gene ID" value="ENSMUSG00000039159.17"/>
</dbReference>
<dbReference type="GeneID" id="22214"/>
<dbReference type="KEGG" id="mmu:22214"/>
<dbReference type="UCSC" id="uc009bey.3">
    <property type="organism name" value="mouse"/>
</dbReference>
<dbReference type="AGR" id="MGI:104632"/>
<dbReference type="CTD" id="7328"/>
<dbReference type="MGI" id="MGI:104632">
    <property type="gene designation" value="Ube2h"/>
</dbReference>
<dbReference type="VEuPathDB" id="HostDB:ENSMUSG00000039159"/>
<dbReference type="eggNOG" id="KOG0416">
    <property type="taxonomic scope" value="Eukaryota"/>
</dbReference>
<dbReference type="GeneTree" id="ENSGT00390000004852"/>
<dbReference type="HOGENOM" id="CLU_030988_7_5_1"/>
<dbReference type="InParanoid" id="P62257"/>
<dbReference type="OMA" id="KFYVRFK"/>
<dbReference type="OrthoDB" id="269518at2759"/>
<dbReference type="PhylomeDB" id="P62257"/>
<dbReference type="TreeFam" id="TF101121"/>
<dbReference type="Reactome" id="R-MMU-8866652">
    <property type="pathway name" value="Synthesis of active ubiquitin: roles of E1 and E2 enzymes"/>
</dbReference>
<dbReference type="Reactome" id="R-MMU-983168">
    <property type="pathway name" value="Antigen processing: Ubiquitination &amp; Proteasome degradation"/>
</dbReference>
<dbReference type="UniPathway" id="UPA00143"/>
<dbReference type="BioGRID-ORCS" id="22214">
    <property type="hits" value="8 hits in 77 CRISPR screens"/>
</dbReference>
<dbReference type="ChiTaRS" id="Ube2h">
    <property type="organism name" value="mouse"/>
</dbReference>
<dbReference type="PRO" id="PR:P62257"/>
<dbReference type="Proteomes" id="UP000000589">
    <property type="component" value="Chromosome 6"/>
</dbReference>
<dbReference type="RNAct" id="P62257">
    <property type="molecule type" value="protein"/>
</dbReference>
<dbReference type="Bgee" id="ENSMUSG00000039159">
    <property type="expression patterns" value="Expressed in blood and 251 other cell types or tissues"/>
</dbReference>
<dbReference type="ExpressionAtlas" id="P62257">
    <property type="expression patterns" value="baseline and differential"/>
</dbReference>
<dbReference type="GO" id="GO:0005524">
    <property type="term" value="F:ATP binding"/>
    <property type="evidence" value="ECO:0007669"/>
    <property type="project" value="UniProtKB-KW"/>
</dbReference>
<dbReference type="GO" id="GO:0061631">
    <property type="term" value="F:ubiquitin conjugating enzyme activity"/>
    <property type="evidence" value="ECO:0000316"/>
    <property type="project" value="MGI"/>
</dbReference>
<dbReference type="GO" id="GO:0004842">
    <property type="term" value="F:ubiquitin-protein transferase activity"/>
    <property type="evidence" value="ECO:0000250"/>
    <property type="project" value="UniProtKB"/>
</dbReference>
<dbReference type="GO" id="GO:0043161">
    <property type="term" value="P:proteasome-mediated ubiquitin-dependent protein catabolic process"/>
    <property type="evidence" value="ECO:0000316"/>
    <property type="project" value="MGI"/>
</dbReference>
<dbReference type="GO" id="GO:0070979">
    <property type="term" value="P:protein K11-linked ubiquitination"/>
    <property type="evidence" value="ECO:0000250"/>
    <property type="project" value="UniProtKB"/>
</dbReference>
<dbReference type="GO" id="GO:0070936">
    <property type="term" value="P:protein K48-linked ubiquitination"/>
    <property type="evidence" value="ECO:0000250"/>
    <property type="project" value="UniProtKB"/>
</dbReference>
<dbReference type="CDD" id="cd23797">
    <property type="entry name" value="UBCc_UBE2H"/>
    <property type="match status" value="1"/>
</dbReference>
<dbReference type="FunFam" id="3.10.110.10:FF:000078">
    <property type="entry name" value="ubiquitin-conjugating enzyme E2 H isoform X2"/>
    <property type="match status" value="1"/>
</dbReference>
<dbReference type="Gene3D" id="3.10.110.10">
    <property type="entry name" value="Ubiquitin Conjugating Enzyme"/>
    <property type="match status" value="1"/>
</dbReference>
<dbReference type="InterPro" id="IPR000608">
    <property type="entry name" value="UBQ-conjugat_E2_core"/>
</dbReference>
<dbReference type="InterPro" id="IPR023313">
    <property type="entry name" value="UBQ-conjugating_AS"/>
</dbReference>
<dbReference type="InterPro" id="IPR016135">
    <property type="entry name" value="UBQ-conjugating_enzyme/RWD"/>
</dbReference>
<dbReference type="PANTHER" id="PTHR24068">
    <property type="entry name" value="UBIQUITIN-CONJUGATING ENZYME E2"/>
    <property type="match status" value="1"/>
</dbReference>
<dbReference type="Pfam" id="PF00179">
    <property type="entry name" value="UQ_con"/>
    <property type="match status" value="1"/>
</dbReference>
<dbReference type="SMART" id="SM00212">
    <property type="entry name" value="UBCc"/>
    <property type="match status" value="1"/>
</dbReference>
<dbReference type="SUPFAM" id="SSF54495">
    <property type="entry name" value="UBC-like"/>
    <property type="match status" value="1"/>
</dbReference>
<dbReference type="PROSITE" id="PS00183">
    <property type="entry name" value="UBC_1"/>
    <property type="match status" value="1"/>
</dbReference>
<dbReference type="PROSITE" id="PS50127">
    <property type="entry name" value="UBC_2"/>
    <property type="match status" value="1"/>
</dbReference>
<proteinExistence type="evidence at protein level"/>
<reference key="1">
    <citation type="journal article" date="1995" name="Proc. Natl. Acad. Sci. U.S.A.">
        <title>Induction of ubiquitin-conjugating enzymes during terminal erythroid differentiation.</title>
        <authorList>
            <person name="Wefes I."/>
            <person name="Mastrandrea L.D."/>
            <person name="Haldeman M."/>
            <person name="Koury S.T."/>
            <person name="Tamburlin J."/>
            <person name="Pickart C.M."/>
            <person name="Finley D."/>
        </authorList>
    </citation>
    <scope>NUCLEOTIDE SEQUENCE [MRNA]</scope>
    <scope>TISSUE SPECIFICITY</scope>
    <source>
        <strain>C57BL/6J</strain>
    </source>
</reference>
<reference key="2">
    <citation type="journal article" date="1995" name="Gene">
        <title>Characterization of a cDNA clone encoding E2-20K, a murine ubiquitin-conjugating enzyme.</title>
        <authorList>
            <person name="Wefes I."/>
            <person name="Kaiser P."/>
            <person name="Schneider R."/>
            <person name="Pickart C.M."/>
            <person name="Finley D."/>
        </authorList>
    </citation>
    <scope>NUCLEOTIDE SEQUENCE [MRNA]</scope>
    <scope>TISSUE SPECIFICITY</scope>
    <source>
        <strain>C57BL/6J</strain>
    </source>
</reference>
<reference key="3">
    <citation type="journal article" date="2004" name="Genome Res.">
        <title>The status, quality, and expansion of the NIH full-length cDNA project: the Mammalian Gene Collection (MGC).</title>
        <authorList>
            <consortium name="The MGC Project Team"/>
        </authorList>
    </citation>
    <scope>NUCLEOTIDE SEQUENCE [LARGE SCALE MRNA]</scope>
    <source>
        <strain>FVB/N</strain>
        <tissue>Mammary tumor</tissue>
    </source>
</reference>
<reference key="4">
    <citation type="journal article" date="2010" name="Cell">
        <title>A tissue-specific atlas of mouse protein phosphorylation and expression.</title>
        <authorList>
            <person name="Huttlin E.L."/>
            <person name="Jedrychowski M.P."/>
            <person name="Elias J.E."/>
            <person name="Goswami T."/>
            <person name="Rad R."/>
            <person name="Beausoleil S.A."/>
            <person name="Villen J."/>
            <person name="Haas W."/>
            <person name="Sowa M.E."/>
            <person name="Gygi S.P."/>
        </authorList>
    </citation>
    <scope>IDENTIFICATION BY MASS SPECTROMETRY [LARGE SCALE ANALYSIS]</scope>
    <source>
        <tissue>Brain</tissue>
        <tissue>Heart</tissue>
        <tissue>Kidney</tissue>
        <tissue>Liver</tissue>
        <tissue>Lung</tissue>
        <tissue>Pancreas</tissue>
        <tissue>Spleen</tissue>
        <tissue>Testis</tissue>
    </source>
</reference>
<reference key="5">
    <citation type="journal article" date="2013" name="Mol. Cell">
        <title>SIRT5-mediated lysine desuccinylation impacts diverse metabolic pathways.</title>
        <authorList>
            <person name="Park J."/>
            <person name="Chen Y."/>
            <person name="Tishkoff D.X."/>
            <person name="Peng C."/>
            <person name="Tan M."/>
            <person name="Dai L."/>
            <person name="Xie Z."/>
            <person name="Zhang Y."/>
            <person name="Zwaans B.M."/>
            <person name="Skinner M.E."/>
            <person name="Lombard D.B."/>
            <person name="Zhao Y."/>
        </authorList>
    </citation>
    <scope>ACETYLATION [LARGE SCALE ANALYSIS] AT LYS-60</scope>
    <scope>IDENTIFICATION BY MASS SPECTROMETRY [LARGE SCALE ANALYSIS]</scope>
    <source>
        <tissue>Embryonic fibroblast</tissue>
    </source>
</reference>